<accession>P91828</accession>
<evidence type="ECO:0000250" key="1">
    <source>
        <dbReference type="UniProtKB" id="A8Q2D1"/>
    </source>
</evidence>
<evidence type="ECO:0000255" key="2"/>
<evidence type="ECO:0000255" key="3">
    <source>
        <dbReference type="PROSITE-ProRule" id="PRU00233"/>
    </source>
</evidence>
<evidence type="ECO:0000255" key="4">
    <source>
        <dbReference type="PROSITE-ProRule" id="PRU01211"/>
    </source>
</evidence>
<evidence type="ECO:0000305" key="5"/>
<gene>
    <name type="primary">nas-5</name>
    <name type="ORF">T23H4.3</name>
</gene>
<name>NAS5_CAEEL</name>
<sequence length="360" mass="40772">MDIKQLLLSIILTVSVVNGRGRRINIYGAENGKSDIVQLRGPAEQLVYSSPIRERRPIFRNALLSNSPLRWSKMQDLDGNYLIPYVISGNYDTVERDTIKTAMEKIANNTCIRLIPRTNQPDYAEINNKKGQGCYASIGRFPGKNVVMLESNDDQSCIQEDTVIHELFHVIGLWHEHMRADRDAFINVLYKNIEPAQYPQFEKLSSRDATTYSVPYDYNSVMHYDENAFAKPGKISMMTKDSKFQKVIGHPKDASSNDYKKVCAIYHCSKCMHQDFQQIVEQEHIELNNPIITNAPVQQGDSCTDRLGICPMLKSREMLNCKVMATFCCSSCSAPTSTTTTTSGTPSDGSLWQRIKSIFQ</sequence>
<proteinExistence type="inferred from homology"/>
<comment type="function">
    <text evidence="1">Metalloprotease.</text>
</comment>
<comment type="cofactor">
    <cofactor evidence="4">
        <name>Zn(2+)</name>
        <dbReference type="ChEBI" id="CHEBI:29105"/>
    </cofactor>
    <text evidence="4">Binds 1 zinc ion per subunit.</text>
</comment>
<comment type="subcellular location">
    <subcellularLocation>
        <location evidence="5">Secreted</location>
    </subcellularLocation>
</comment>
<protein>
    <recommendedName>
        <fullName>Zinc metalloproteinase nas-5</fullName>
        <ecNumber evidence="1">3.4.24.-</ecNumber>
    </recommendedName>
    <alternativeName>
        <fullName>Nematode astacin 5</fullName>
    </alternativeName>
</protein>
<reference key="1">
    <citation type="journal article" date="1998" name="Science">
        <title>Genome sequence of the nematode C. elegans: a platform for investigating biology.</title>
        <authorList>
            <consortium name="The C. elegans sequencing consortium"/>
        </authorList>
    </citation>
    <scope>NUCLEOTIDE SEQUENCE [LARGE SCALE GENOMIC DNA]</scope>
    <source>
        <strain>Bristol N2</strain>
    </source>
</reference>
<reference key="2">
    <citation type="journal article" date="2003" name="Eur. J. Biochem.">
        <title>The astacin protein family in Caenorhabditis elegans.</title>
        <authorList>
            <person name="Moehrlen F."/>
            <person name="Hutter H."/>
            <person name="Zwilling R."/>
        </authorList>
    </citation>
    <scope>NOMENCLATURE</scope>
</reference>
<organism>
    <name type="scientific">Caenorhabditis elegans</name>
    <dbReference type="NCBI Taxonomy" id="6239"/>
    <lineage>
        <taxon>Eukaryota</taxon>
        <taxon>Metazoa</taxon>
        <taxon>Ecdysozoa</taxon>
        <taxon>Nematoda</taxon>
        <taxon>Chromadorea</taxon>
        <taxon>Rhabditida</taxon>
        <taxon>Rhabditina</taxon>
        <taxon>Rhabditomorpha</taxon>
        <taxon>Rhabditoidea</taxon>
        <taxon>Rhabditidae</taxon>
        <taxon>Peloderinae</taxon>
        <taxon>Caenorhabditis</taxon>
    </lineage>
</organism>
<dbReference type="EC" id="3.4.24.-" evidence="1"/>
<dbReference type="EMBL" id="Z83240">
    <property type="protein sequence ID" value="CAB05814.2"/>
    <property type="molecule type" value="Genomic_DNA"/>
</dbReference>
<dbReference type="PIR" id="T25210">
    <property type="entry name" value="T25210"/>
</dbReference>
<dbReference type="RefSeq" id="NP_492616.1">
    <property type="nucleotide sequence ID" value="NM_060215.3"/>
</dbReference>
<dbReference type="SMR" id="P91828"/>
<dbReference type="STRING" id="6239.T23H4.3.1"/>
<dbReference type="MEROPS" id="M12.A45"/>
<dbReference type="GlyCosmos" id="P91828">
    <property type="glycosylation" value="1 site, No reported glycans"/>
</dbReference>
<dbReference type="PaxDb" id="6239-T23H4.3"/>
<dbReference type="PeptideAtlas" id="P91828"/>
<dbReference type="EnsemblMetazoa" id="T23H4.3.1">
    <property type="protein sequence ID" value="T23H4.3.1"/>
    <property type="gene ID" value="WBGene00003524"/>
</dbReference>
<dbReference type="GeneID" id="188819"/>
<dbReference type="KEGG" id="cel:CELE_T23H4.3"/>
<dbReference type="UCSC" id="T23H4.3">
    <property type="organism name" value="c. elegans"/>
</dbReference>
<dbReference type="AGR" id="WB:WBGene00003524"/>
<dbReference type="CTD" id="188819"/>
<dbReference type="WormBase" id="T23H4.3">
    <property type="protein sequence ID" value="CE25126"/>
    <property type="gene ID" value="WBGene00003524"/>
    <property type="gene designation" value="nas-5"/>
</dbReference>
<dbReference type="eggNOG" id="KOG3714">
    <property type="taxonomic scope" value="Eukaryota"/>
</dbReference>
<dbReference type="HOGENOM" id="CLU_795077_0_0_1"/>
<dbReference type="InParanoid" id="P91828"/>
<dbReference type="OMA" id="QGCYASI"/>
<dbReference type="OrthoDB" id="7721051at2759"/>
<dbReference type="PhylomeDB" id="P91828"/>
<dbReference type="PRO" id="PR:P91828"/>
<dbReference type="Proteomes" id="UP000001940">
    <property type="component" value="Chromosome I"/>
</dbReference>
<dbReference type="Bgee" id="WBGene00003524">
    <property type="expression patterns" value="Expressed in adult organism and 1 other cell type or tissue"/>
</dbReference>
<dbReference type="GO" id="GO:0005576">
    <property type="term" value="C:extracellular region"/>
    <property type="evidence" value="ECO:0007669"/>
    <property type="project" value="UniProtKB-SubCell"/>
</dbReference>
<dbReference type="GO" id="GO:0004222">
    <property type="term" value="F:metalloendopeptidase activity"/>
    <property type="evidence" value="ECO:0000318"/>
    <property type="project" value="GO_Central"/>
</dbReference>
<dbReference type="GO" id="GO:0008270">
    <property type="term" value="F:zinc ion binding"/>
    <property type="evidence" value="ECO:0007669"/>
    <property type="project" value="InterPro"/>
</dbReference>
<dbReference type="GO" id="GO:0043050">
    <property type="term" value="P:nematode pharyngeal pumping"/>
    <property type="evidence" value="ECO:0000316"/>
    <property type="project" value="WormBase"/>
</dbReference>
<dbReference type="GO" id="GO:0160094">
    <property type="term" value="P:nematode pharynx development"/>
    <property type="evidence" value="ECO:0000316"/>
    <property type="project" value="WormBase"/>
</dbReference>
<dbReference type="GO" id="GO:0006508">
    <property type="term" value="P:proteolysis"/>
    <property type="evidence" value="ECO:0007669"/>
    <property type="project" value="UniProtKB-KW"/>
</dbReference>
<dbReference type="CDD" id="cd04280">
    <property type="entry name" value="ZnMc_astacin_like"/>
    <property type="match status" value="1"/>
</dbReference>
<dbReference type="FunFam" id="3.40.390.10:FF:000130">
    <property type="entry name" value="Metalloendopeptidase"/>
    <property type="match status" value="1"/>
</dbReference>
<dbReference type="Gene3D" id="3.40.390.10">
    <property type="entry name" value="Collagenase (Catalytic Domain)"/>
    <property type="match status" value="1"/>
</dbReference>
<dbReference type="InterPro" id="IPR034035">
    <property type="entry name" value="Astacin-like_dom"/>
</dbReference>
<dbReference type="InterPro" id="IPR024079">
    <property type="entry name" value="MetalloPept_cat_dom_sf"/>
</dbReference>
<dbReference type="InterPro" id="IPR001506">
    <property type="entry name" value="Peptidase_M12A"/>
</dbReference>
<dbReference type="InterPro" id="IPR006026">
    <property type="entry name" value="Peptidase_Metallo"/>
</dbReference>
<dbReference type="InterPro" id="IPR010909">
    <property type="entry name" value="PLAC"/>
</dbReference>
<dbReference type="PANTHER" id="PTHR10127">
    <property type="entry name" value="DISCOIDIN, CUB, EGF, LAMININ , AND ZINC METALLOPROTEASE DOMAIN CONTAINING"/>
    <property type="match status" value="1"/>
</dbReference>
<dbReference type="PANTHER" id="PTHR10127:SF880">
    <property type="entry name" value="ZINC METALLOPROTEINASE NAS-5"/>
    <property type="match status" value="1"/>
</dbReference>
<dbReference type="Pfam" id="PF01400">
    <property type="entry name" value="Astacin"/>
    <property type="match status" value="1"/>
</dbReference>
<dbReference type="PRINTS" id="PR00480">
    <property type="entry name" value="ASTACIN"/>
</dbReference>
<dbReference type="SMART" id="SM00235">
    <property type="entry name" value="ZnMc"/>
    <property type="match status" value="1"/>
</dbReference>
<dbReference type="SUPFAM" id="SSF55486">
    <property type="entry name" value="Metalloproteases ('zincins'), catalytic domain"/>
    <property type="match status" value="1"/>
</dbReference>
<dbReference type="PROSITE" id="PS51864">
    <property type="entry name" value="ASTACIN"/>
    <property type="match status" value="1"/>
</dbReference>
<dbReference type="PROSITE" id="PS50900">
    <property type="entry name" value="PLAC"/>
    <property type="match status" value="1"/>
</dbReference>
<dbReference type="PROSITE" id="PS00142">
    <property type="entry name" value="ZINC_PROTEASE"/>
    <property type="match status" value="1"/>
</dbReference>
<feature type="signal peptide" evidence="2">
    <location>
        <begin position="1"/>
        <end position="21"/>
    </location>
</feature>
<feature type="propeptide" id="PRO_0000442653" evidence="5">
    <location>
        <begin position="22"/>
        <end status="unknown"/>
    </location>
</feature>
<feature type="chain" id="PRO_0000028910" description="Zinc metalloproteinase nas-5">
    <location>
        <begin status="unknown"/>
        <end position="360"/>
    </location>
</feature>
<feature type="domain" description="Peptidase M12A" evidence="4">
    <location>
        <begin position="61"/>
        <end position="269"/>
    </location>
</feature>
<feature type="domain" description="PLAC" evidence="3">
    <location>
        <begin position="299"/>
        <end position="336"/>
    </location>
</feature>
<feature type="active site" evidence="4">
    <location>
        <position position="166"/>
    </location>
</feature>
<feature type="binding site" evidence="4">
    <location>
        <position position="165"/>
    </location>
    <ligand>
        <name>Zn(2+)</name>
        <dbReference type="ChEBI" id="CHEBI:29105"/>
        <note>catalytic</note>
    </ligand>
</feature>
<feature type="binding site" evidence="4">
    <location>
        <position position="169"/>
    </location>
    <ligand>
        <name>Zn(2+)</name>
        <dbReference type="ChEBI" id="CHEBI:29105"/>
        <note>catalytic</note>
    </ligand>
</feature>
<feature type="binding site" evidence="4">
    <location>
        <position position="175"/>
    </location>
    <ligand>
        <name>Zn(2+)</name>
        <dbReference type="ChEBI" id="CHEBI:29105"/>
        <note>catalytic</note>
    </ligand>
</feature>
<feature type="glycosylation site" description="N-linked (GlcNAc...) asparagine" evidence="2">
    <location>
        <position position="108"/>
    </location>
</feature>
<feature type="disulfide bond" evidence="4">
    <location>
        <begin position="111"/>
        <end position="268"/>
    </location>
</feature>
<feature type="disulfide bond" evidence="4">
    <location>
        <begin position="134"/>
        <end position="157"/>
    </location>
</feature>
<keyword id="KW-1015">Disulfide bond</keyword>
<keyword id="KW-0325">Glycoprotein</keyword>
<keyword id="KW-0378">Hydrolase</keyword>
<keyword id="KW-0479">Metal-binding</keyword>
<keyword id="KW-0482">Metalloprotease</keyword>
<keyword id="KW-0645">Protease</keyword>
<keyword id="KW-1185">Reference proteome</keyword>
<keyword id="KW-0964">Secreted</keyword>
<keyword id="KW-0732">Signal</keyword>
<keyword id="KW-0862">Zinc</keyword>
<keyword id="KW-0865">Zymogen</keyword>